<feature type="chain" id="PRO_0000115493" description="Small ribosomal subunit protein uS15">
    <location>
        <begin position="1"/>
        <end position="89"/>
    </location>
</feature>
<accession>Q5YSV5</accession>
<sequence>MALTTEQKSAILAEYGLHEKDTGSPEAQIALLSKRIADITEHLKKHKHDHHTRHGLMALIGRRKRLSKYLADKDIERYRALIERLGLRR</sequence>
<evidence type="ECO:0000255" key="1">
    <source>
        <dbReference type="HAMAP-Rule" id="MF_01343"/>
    </source>
</evidence>
<evidence type="ECO:0000305" key="2"/>
<keyword id="KW-1185">Reference proteome</keyword>
<keyword id="KW-0687">Ribonucleoprotein</keyword>
<keyword id="KW-0689">Ribosomal protein</keyword>
<keyword id="KW-0694">RNA-binding</keyword>
<keyword id="KW-0699">rRNA-binding</keyword>
<proteinExistence type="inferred from homology"/>
<name>RS15_NOCFA</name>
<protein>
    <recommendedName>
        <fullName evidence="1">Small ribosomal subunit protein uS15</fullName>
    </recommendedName>
    <alternativeName>
        <fullName evidence="2">30S ribosomal protein S15</fullName>
    </alternativeName>
</protein>
<organism>
    <name type="scientific">Nocardia farcinica (strain IFM 10152)</name>
    <dbReference type="NCBI Taxonomy" id="247156"/>
    <lineage>
        <taxon>Bacteria</taxon>
        <taxon>Bacillati</taxon>
        <taxon>Actinomycetota</taxon>
        <taxon>Actinomycetes</taxon>
        <taxon>Mycobacteriales</taxon>
        <taxon>Nocardiaceae</taxon>
        <taxon>Nocardia</taxon>
    </lineage>
</organism>
<dbReference type="EMBL" id="AP006618">
    <property type="protein sequence ID" value="BAD58736.1"/>
    <property type="molecule type" value="Genomic_DNA"/>
</dbReference>
<dbReference type="RefSeq" id="WP_011210421.1">
    <property type="nucleotide sequence ID" value="NC_006361.1"/>
</dbReference>
<dbReference type="SMR" id="Q5YSV5"/>
<dbReference type="STRING" id="247156.NFA_38880"/>
<dbReference type="GeneID" id="61134573"/>
<dbReference type="KEGG" id="nfa:NFA_38880"/>
<dbReference type="eggNOG" id="COG0184">
    <property type="taxonomic scope" value="Bacteria"/>
</dbReference>
<dbReference type="HOGENOM" id="CLU_148518_0_0_11"/>
<dbReference type="OrthoDB" id="9799262at2"/>
<dbReference type="Proteomes" id="UP000006820">
    <property type="component" value="Chromosome"/>
</dbReference>
<dbReference type="GO" id="GO:0022627">
    <property type="term" value="C:cytosolic small ribosomal subunit"/>
    <property type="evidence" value="ECO:0007669"/>
    <property type="project" value="TreeGrafter"/>
</dbReference>
<dbReference type="GO" id="GO:0019843">
    <property type="term" value="F:rRNA binding"/>
    <property type="evidence" value="ECO:0007669"/>
    <property type="project" value="UniProtKB-UniRule"/>
</dbReference>
<dbReference type="GO" id="GO:0003735">
    <property type="term" value="F:structural constituent of ribosome"/>
    <property type="evidence" value="ECO:0007669"/>
    <property type="project" value="InterPro"/>
</dbReference>
<dbReference type="GO" id="GO:0006412">
    <property type="term" value="P:translation"/>
    <property type="evidence" value="ECO:0007669"/>
    <property type="project" value="UniProtKB-UniRule"/>
</dbReference>
<dbReference type="CDD" id="cd00353">
    <property type="entry name" value="Ribosomal_S15p_S13e"/>
    <property type="match status" value="1"/>
</dbReference>
<dbReference type="FunFam" id="1.10.287.10:FF:000002">
    <property type="entry name" value="30S ribosomal protein S15"/>
    <property type="match status" value="1"/>
</dbReference>
<dbReference type="Gene3D" id="6.10.250.3130">
    <property type="match status" value="1"/>
</dbReference>
<dbReference type="Gene3D" id="1.10.287.10">
    <property type="entry name" value="S15/NS1, RNA-binding"/>
    <property type="match status" value="1"/>
</dbReference>
<dbReference type="HAMAP" id="MF_01343_B">
    <property type="entry name" value="Ribosomal_uS15_B"/>
    <property type="match status" value="1"/>
</dbReference>
<dbReference type="InterPro" id="IPR000589">
    <property type="entry name" value="Ribosomal_uS15"/>
</dbReference>
<dbReference type="InterPro" id="IPR005290">
    <property type="entry name" value="Ribosomal_uS15_bac-type"/>
</dbReference>
<dbReference type="InterPro" id="IPR009068">
    <property type="entry name" value="uS15_NS1_RNA-bd_sf"/>
</dbReference>
<dbReference type="NCBIfam" id="TIGR00952">
    <property type="entry name" value="S15_bact"/>
    <property type="match status" value="1"/>
</dbReference>
<dbReference type="PANTHER" id="PTHR23321">
    <property type="entry name" value="RIBOSOMAL PROTEIN S15, BACTERIAL AND ORGANELLAR"/>
    <property type="match status" value="1"/>
</dbReference>
<dbReference type="PANTHER" id="PTHR23321:SF26">
    <property type="entry name" value="SMALL RIBOSOMAL SUBUNIT PROTEIN US15M"/>
    <property type="match status" value="1"/>
</dbReference>
<dbReference type="Pfam" id="PF00312">
    <property type="entry name" value="Ribosomal_S15"/>
    <property type="match status" value="1"/>
</dbReference>
<dbReference type="SMART" id="SM01387">
    <property type="entry name" value="Ribosomal_S15"/>
    <property type="match status" value="1"/>
</dbReference>
<dbReference type="SUPFAM" id="SSF47060">
    <property type="entry name" value="S15/NS1 RNA-binding domain"/>
    <property type="match status" value="1"/>
</dbReference>
<dbReference type="PROSITE" id="PS00362">
    <property type="entry name" value="RIBOSOMAL_S15"/>
    <property type="match status" value="1"/>
</dbReference>
<reference key="1">
    <citation type="journal article" date="2004" name="Proc. Natl. Acad. Sci. U.S.A.">
        <title>The complete genomic sequence of Nocardia farcinica IFM 10152.</title>
        <authorList>
            <person name="Ishikawa J."/>
            <person name="Yamashita A."/>
            <person name="Mikami Y."/>
            <person name="Hoshino Y."/>
            <person name="Kurita H."/>
            <person name="Hotta K."/>
            <person name="Shiba T."/>
            <person name="Hattori M."/>
        </authorList>
    </citation>
    <scope>NUCLEOTIDE SEQUENCE [LARGE SCALE GENOMIC DNA]</scope>
    <source>
        <strain>IFM 10152</strain>
    </source>
</reference>
<gene>
    <name evidence="1" type="primary">rpsO</name>
    <name type="ordered locus">NFA_38880</name>
</gene>
<comment type="function">
    <text evidence="1">One of the primary rRNA binding proteins, it binds directly to 16S rRNA where it helps nucleate assembly of the platform of the 30S subunit by binding and bridging several RNA helices of the 16S rRNA.</text>
</comment>
<comment type="function">
    <text evidence="1">Forms an intersubunit bridge (bridge B4) with the 23S rRNA of the 50S subunit in the ribosome.</text>
</comment>
<comment type="subunit">
    <text evidence="1">Part of the 30S ribosomal subunit. Forms a bridge to the 50S subunit in the 70S ribosome, contacting the 23S rRNA.</text>
</comment>
<comment type="similarity">
    <text evidence="1">Belongs to the universal ribosomal protein uS15 family.</text>
</comment>